<reference key="1">
    <citation type="journal article" date="1996" name="Plant Cell">
        <title>Salt stress-induced proline transporters and salt stress-repressed broad specificity amino acid permeases identified by suppression of a yeast amino acid permease-targeting mutant.</title>
        <authorList>
            <person name="Rentsch D."/>
            <person name="Hirner B."/>
            <person name="Schmelzer E."/>
            <person name="Frommer W.B."/>
        </authorList>
    </citation>
    <scope>NUCLEOTIDE SEQUENCE [MRNA]</scope>
    <scope>FUNCTION</scope>
    <scope>INDUCTION</scope>
    <scope>TISSUE SPECIFICITY</scope>
    <source>
        <strain>cv. Landsberg erecta</strain>
    </source>
</reference>
<reference key="2">
    <citation type="journal article" date="2000" name="DNA Res.">
        <title>Structural analysis of Arabidopsis thaliana chromosome 5. X. Sequence features of the regions of 3,076,755 bp covered by sixty P1 and TAC clones.</title>
        <authorList>
            <person name="Sato S."/>
            <person name="Nakamura Y."/>
            <person name="Kaneko T."/>
            <person name="Katoh T."/>
            <person name="Asamizu E."/>
            <person name="Kotani H."/>
            <person name="Tabata S."/>
        </authorList>
    </citation>
    <scope>NUCLEOTIDE SEQUENCE [LARGE SCALE GENOMIC DNA]</scope>
    <source>
        <strain>cv. Columbia</strain>
    </source>
</reference>
<reference key="3">
    <citation type="journal article" date="2017" name="Plant J.">
        <title>Araport11: a complete reannotation of the Arabidopsis thaliana reference genome.</title>
        <authorList>
            <person name="Cheng C.Y."/>
            <person name="Krishnakumar V."/>
            <person name="Chan A.P."/>
            <person name="Thibaud-Nissen F."/>
            <person name="Schobel S."/>
            <person name="Town C.D."/>
        </authorList>
    </citation>
    <scope>GENOME REANNOTATION</scope>
    <source>
        <strain>cv. Columbia</strain>
    </source>
</reference>
<reference key="4">
    <citation type="submission" date="2006-07" db="EMBL/GenBank/DDBJ databases">
        <title>Large-scale analysis of RIKEN Arabidopsis full-length (RAFL) cDNAs.</title>
        <authorList>
            <person name="Totoki Y."/>
            <person name="Seki M."/>
            <person name="Ishida J."/>
            <person name="Nakajima M."/>
            <person name="Enju A."/>
            <person name="Kamiya A."/>
            <person name="Narusaka M."/>
            <person name="Shin-i T."/>
            <person name="Nakagawa M."/>
            <person name="Sakamoto N."/>
            <person name="Oishi K."/>
            <person name="Kohara Y."/>
            <person name="Kobayashi M."/>
            <person name="Toyoda A."/>
            <person name="Sakaki Y."/>
            <person name="Sakurai T."/>
            <person name="Iida K."/>
            <person name="Akiyama K."/>
            <person name="Satou M."/>
            <person name="Toyoda T."/>
            <person name="Konagaya A."/>
            <person name="Carninci P."/>
            <person name="Kawai J."/>
            <person name="Hayashizaki Y."/>
            <person name="Shinozaki K."/>
        </authorList>
    </citation>
    <scope>NUCLEOTIDE SEQUENCE [LARGE SCALE MRNA]</scope>
    <source>
        <strain>cv. Columbia</strain>
    </source>
</reference>
<reference key="5">
    <citation type="journal article" date="2002" name="J. Biol. Chem.">
        <title>High affinity amino acid transporters specifically expressed in xylem parenchyma and developing seeds of Arabidopsis.</title>
        <authorList>
            <person name="Okumoto S."/>
            <person name="Schmidt R."/>
            <person name="Tegeder M."/>
            <person name="Fischer W.-N."/>
            <person name="Rentsch D."/>
            <person name="Frommer W.B."/>
            <person name="Koch W."/>
        </authorList>
    </citation>
    <scope>TISSUE SPECIFICITY</scope>
    <scope>BIOPHYSICOCHEMICAL PROPERTIES</scope>
</reference>
<reference key="6">
    <citation type="journal article" date="2002" name="Plant J.">
        <title>Low and high affinity amino acid H+-cotransporters for cellular import of neutral and charged amino acids.</title>
        <authorList>
            <person name="Fischer W.-N."/>
            <person name="Loo D.D.F."/>
            <person name="Koch W."/>
            <person name="Ludewig U."/>
            <person name="Boorer K.J."/>
            <person name="Tegeder M."/>
            <person name="Rentsch D."/>
            <person name="Wright E.M."/>
            <person name="Frommer W.B."/>
        </authorList>
    </citation>
    <scope>CHARACTERIZATION</scope>
</reference>
<reference key="7">
    <citation type="journal article" date="2010" name="J. Exp. Bot.">
        <title>A mutation in amino acid permease AAP6 reduces the amino acid content of the Arabidopsis sieve elements but leaves aphid herbivores unaffected.</title>
        <authorList>
            <person name="Hunt E."/>
            <person name="Gattolin S."/>
            <person name="Newbury H.J."/>
            <person name="Bale J.S."/>
            <person name="Tseng H.-M."/>
            <person name="Barrett D.A."/>
            <person name="Pritchard J."/>
        </authorList>
    </citation>
    <scope>DISRUPTION PHENOTYPE</scope>
</reference>
<protein>
    <recommendedName>
        <fullName>Amino acid permease 6</fullName>
    </recommendedName>
    <alternativeName>
        <fullName>Amino acid transporter AAP6</fullName>
    </alternativeName>
</protein>
<sequence>MEKKKSMFVEQSFPEHEIGDTNKNFDEDGRDKRTGTWMTGSAHIITAVIGSGVLSLAWAIAQLGWVAGPAVLMAFSFITYFTSTMLADCYRSPDPVTGKRNYTYMEVVRSYLGGRKVQLCGLAQYGNLIGITIGYTITASISMVAVKRSNCFHKNGHNVKCATSNTPFMIIFAIIQIILSQIPNFHNLSWLSILAAVMSFCYASIGVGLSIAKAAGGGEHVRTTLTGVTVGIDVSGAEKIWRTFQAIGDIAFAYAYSTVLIEIQDTLKAGPPSENKAMKRASLVGVSTTTFFYMLCGCVGYAAFGNDAPGNFLTGFGFYEPFWLIDFANVCIAVHLIGAYQVFCQPIFQFVESQSAKRWPDNKFITGEYKIHVPCCGDFSINFLRLVWRTSYVVVTAVVAMIFPFFNDFLGLIGAASFWPLTVYFPIEMHIAQKKIPKFSFTWTWLKILSWTCFIVSLVAAAGSVQGLIQSLKDFKPFQAP</sequence>
<proteinExistence type="evidence at protein level"/>
<dbReference type="EMBL" id="X95736">
    <property type="protein sequence ID" value="CAA65051.1"/>
    <property type="molecule type" value="mRNA"/>
</dbReference>
<dbReference type="EMBL" id="AB025627">
    <property type="protein sequence ID" value="BAA97227.1"/>
    <property type="molecule type" value="Genomic_DNA"/>
</dbReference>
<dbReference type="EMBL" id="CP002688">
    <property type="protein sequence ID" value="AED95838.1"/>
    <property type="molecule type" value="Genomic_DNA"/>
</dbReference>
<dbReference type="EMBL" id="AK229102">
    <property type="protein sequence ID" value="BAF00980.1"/>
    <property type="molecule type" value="mRNA"/>
</dbReference>
<dbReference type="PIR" id="T50691">
    <property type="entry name" value="T50691"/>
</dbReference>
<dbReference type="RefSeq" id="NP_199774.1">
    <property type="nucleotide sequence ID" value="NM_124341.4"/>
</dbReference>
<dbReference type="SMR" id="P92934"/>
<dbReference type="BioGRID" id="20271">
    <property type="interactions" value="3"/>
</dbReference>
<dbReference type="FunCoup" id="P92934">
    <property type="interactions" value="2"/>
</dbReference>
<dbReference type="IntAct" id="P92934">
    <property type="interactions" value="2"/>
</dbReference>
<dbReference type="STRING" id="3702.P92934"/>
<dbReference type="TCDB" id="2.A.18.2.4">
    <property type="family name" value="the amino acid/auxin permease (aaap) family"/>
</dbReference>
<dbReference type="SwissPalm" id="P92934"/>
<dbReference type="PaxDb" id="3702-AT5G49630.1"/>
<dbReference type="ProteomicsDB" id="244602"/>
<dbReference type="EnsemblPlants" id="AT5G49630.1">
    <property type="protein sequence ID" value="AT5G49630.1"/>
    <property type="gene ID" value="AT5G49630"/>
</dbReference>
<dbReference type="GeneID" id="835025"/>
<dbReference type="Gramene" id="AT5G49630.1">
    <property type="protein sequence ID" value="AT5G49630.1"/>
    <property type="gene ID" value="AT5G49630"/>
</dbReference>
<dbReference type="KEGG" id="ath:AT5G49630"/>
<dbReference type="Araport" id="AT5G49630"/>
<dbReference type="TAIR" id="AT5G49630">
    <property type="gene designation" value="AAP6"/>
</dbReference>
<dbReference type="eggNOG" id="KOG1303">
    <property type="taxonomic scope" value="Eukaryota"/>
</dbReference>
<dbReference type="HOGENOM" id="CLU_031247_4_1_1"/>
<dbReference type="InParanoid" id="P92934"/>
<dbReference type="OMA" id="FVEGWCA"/>
<dbReference type="OrthoDB" id="40134at2759"/>
<dbReference type="PhylomeDB" id="P92934"/>
<dbReference type="SABIO-RK" id="P92934"/>
<dbReference type="PRO" id="PR:P92934"/>
<dbReference type="Proteomes" id="UP000006548">
    <property type="component" value="Chromosome 5"/>
</dbReference>
<dbReference type="ExpressionAtlas" id="P92934">
    <property type="expression patterns" value="baseline and differential"/>
</dbReference>
<dbReference type="GO" id="GO:0005886">
    <property type="term" value="C:plasma membrane"/>
    <property type="evidence" value="ECO:0007669"/>
    <property type="project" value="UniProtKB-SubCell"/>
</dbReference>
<dbReference type="GO" id="GO:0015172">
    <property type="term" value="F:acidic amino acid transmembrane transporter activity"/>
    <property type="evidence" value="ECO:0000314"/>
    <property type="project" value="TAIR"/>
</dbReference>
<dbReference type="GO" id="GO:0015175">
    <property type="term" value="F:neutral L-amino acid transmembrane transporter activity"/>
    <property type="evidence" value="ECO:0000314"/>
    <property type="project" value="TAIR"/>
</dbReference>
<dbReference type="GO" id="GO:0015293">
    <property type="term" value="F:symporter activity"/>
    <property type="evidence" value="ECO:0007669"/>
    <property type="project" value="UniProtKB-KW"/>
</dbReference>
<dbReference type="GO" id="GO:0015810">
    <property type="term" value="P:aspartate transmembrane transport"/>
    <property type="evidence" value="ECO:0000314"/>
    <property type="project" value="TAIR"/>
</dbReference>
<dbReference type="GO" id="GO:0015827">
    <property type="term" value="P:tryptophan transport"/>
    <property type="evidence" value="ECO:0000314"/>
    <property type="project" value="TAIR"/>
</dbReference>
<dbReference type="FunFam" id="1.20.1740.10:FF:000055">
    <property type="entry name" value="Amino acid permease 6"/>
    <property type="match status" value="1"/>
</dbReference>
<dbReference type="InterPro" id="IPR013057">
    <property type="entry name" value="AA_transpt_TM"/>
</dbReference>
<dbReference type="PANTHER" id="PTHR48017">
    <property type="entry name" value="OS05G0424000 PROTEIN-RELATED"/>
    <property type="match status" value="1"/>
</dbReference>
<dbReference type="Pfam" id="PF01490">
    <property type="entry name" value="Aa_trans"/>
    <property type="match status" value="1"/>
</dbReference>
<feature type="chain" id="PRO_0000387504" description="Amino acid permease 6">
    <location>
        <begin position="1"/>
        <end position="481"/>
    </location>
</feature>
<feature type="topological domain" description="Cytoplasmic" evidence="1">
    <location>
        <begin position="1"/>
        <end position="36"/>
    </location>
</feature>
<feature type="transmembrane region" description="Helical" evidence="1">
    <location>
        <begin position="37"/>
        <end position="57"/>
    </location>
</feature>
<feature type="transmembrane region" description="Helical" evidence="1">
    <location>
        <begin position="58"/>
        <end position="78"/>
    </location>
</feature>
<feature type="topological domain" description="Cytoplasmic" evidence="1">
    <location>
        <begin position="79"/>
        <end position="125"/>
    </location>
</feature>
<feature type="transmembrane region" description="Helical" evidence="1">
    <location>
        <begin position="126"/>
        <end position="146"/>
    </location>
</feature>
<feature type="topological domain" description="Extracellular" evidence="1">
    <location>
        <begin position="147"/>
        <end position="167"/>
    </location>
</feature>
<feature type="transmembrane region" description="Helical" evidence="1">
    <location>
        <begin position="168"/>
        <end position="188"/>
    </location>
</feature>
<feature type="topological domain" description="Cytoplasmic" evidence="1">
    <location>
        <begin position="189"/>
        <end position="190"/>
    </location>
</feature>
<feature type="transmembrane region" description="Helical" evidence="1">
    <location>
        <begin position="191"/>
        <end position="211"/>
    </location>
</feature>
<feature type="topological domain" description="Extracellular" evidence="1">
    <location>
        <begin position="212"/>
        <end position="242"/>
    </location>
</feature>
<feature type="transmembrane region" description="Helical" evidence="1">
    <location>
        <begin position="243"/>
        <end position="263"/>
    </location>
</feature>
<feature type="topological domain" description="Cytoplasmic" evidence="1">
    <location>
        <begin position="264"/>
        <end position="283"/>
    </location>
</feature>
<feature type="transmembrane region" description="Helical" evidence="1">
    <location>
        <begin position="284"/>
        <end position="304"/>
    </location>
</feature>
<feature type="topological domain" description="Extracellular" evidence="1">
    <location>
        <begin position="305"/>
        <end position="321"/>
    </location>
</feature>
<feature type="transmembrane region" description="Helical" evidence="1">
    <location>
        <begin position="322"/>
        <end position="342"/>
    </location>
</feature>
<feature type="topological domain" description="Cytoplasmic" evidence="1">
    <location>
        <begin position="343"/>
        <end position="385"/>
    </location>
</feature>
<feature type="transmembrane region" description="Helical" evidence="1">
    <location>
        <begin position="386"/>
        <end position="405"/>
    </location>
</feature>
<feature type="topological domain" description="Extracellular" evidence="1">
    <location>
        <begin position="406"/>
        <end position="408"/>
    </location>
</feature>
<feature type="transmembrane region" description="Helical" evidence="1">
    <location>
        <begin position="409"/>
        <end position="427"/>
    </location>
</feature>
<feature type="topological domain" description="Cytoplasmic" evidence="1">
    <location>
        <begin position="428"/>
        <end position="447"/>
    </location>
</feature>
<feature type="transmembrane region" description="Helical" evidence="1">
    <location>
        <begin position="448"/>
        <end position="468"/>
    </location>
</feature>
<feature type="topological domain" description="Extracellular" evidence="1">
    <location>
        <begin position="469"/>
        <end position="481"/>
    </location>
</feature>
<comment type="function">
    <text evidence="4">Amino acid-proton symporter. Stereospecific transporter with a broad specificity for tryptophan, proline, and neutral and acidic amino acids. Has an affinity for aspartate in a physiological range. Involved in the uptake of amino acids diffusing out of the xylem tracheids into the xylem parenchyma.</text>
</comment>
<comment type="biophysicochemical properties">
    <kinetics>
        <KM evidence="2">248 uM for aspartate</KM>
        <Vmax evidence="2">0.342 nmol/min/mg enzyme toward aspartate</Vmax>
    </kinetics>
</comment>
<comment type="subcellular location">
    <subcellularLocation>
        <location evidence="5">Cell membrane</location>
        <topology evidence="5">Multi-pass membrane protein</topology>
    </subcellularLocation>
</comment>
<comment type="tissue specificity">
    <text evidence="2 4">Expressed in roots and leaves, and at lower levels in stems and flowers. Found in the xylem parenchyma.</text>
</comment>
<comment type="developmental stage">
    <text>Expressed at higher levels in sink as compared with source leaves.</text>
</comment>
<comment type="induction">
    <text evidence="4">Down-regulated by drought and salt stress.</text>
</comment>
<comment type="disruption phenotype">
    <text evidence="3">Larger seeds and rosette leaves and increased number of cauline leaves at flowering. Decreased concentration of lysine, phenylalanine, leucine and aspartic acid in the sieve element sap, but no significant effect on aphid feeding behavior or reproduction.</text>
</comment>
<comment type="similarity">
    <text evidence="5">Belongs to the amino acid/polyamine transporter 2 family. Amino acid/auxin permease (AAAP) (TC 2.A.18.2) subfamily.</text>
</comment>
<keyword id="KW-0029">Amino-acid transport</keyword>
<keyword id="KW-1003">Cell membrane</keyword>
<keyword id="KW-0472">Membrane</keyword>
<keyword id="KW-1185">Reference proteome</keyword>
<keyword id="KW-0769">Symport</keyword>
<keyword id="KW-0812">Transmembrane</keyword>
<keyword id="KW-1133">Transmembrane helix</keyword>
<keyword id="KW-0813">Transport</keyword>
<evidence type="ECO:0000255" key="1"/>
<evidence type="ECO:0000269" key="2">
    <source>
    </source>
</evidence>
<evidence type="ECO:0000269" key="3">
    <source>
    </source>
</evidence>
<evidence type="ECO:0000269" key="4">
    <source>
    </source>
</evidence>
<evidence type="ECO:0000305" key="5"/>
<gene>
    <name type="primary">AAP6</name>
    <name type="ordered locus">At5g49630</name>
    <name type="ORF">MNI5.1</name>
</gene>
<accession>P92934</accession>
<organism>
    <name type="scientific">Arabidopsis thaliana</name>
    <name type="common">Mouse-ear cress</name>
    <dbReference type="NCBI Taxonomy" id="3702"/>
    <lineage>
        <taxon>Eukaryota</taxon>
        <taxon>Viridiplantae</taxon>
        <taxon>Streptophyta</taxon>
        <taxon>Embryophyta</taxon>
        <taxon>Tracheophyta</taxon>
        <taxon>Spermatophyta</taxon>
        <taxon>Magnoliopsida</taxon>
        <taxon>eudicotyledons</taxon>
        <taxon>Gunneridae</taxon>
        <taxon>Pentapetalae</taxon>
        <taxon>rosids</taxon>
        <taxon>malvids</taxon>
        <taxon>Brassicales</taxon>
        <taxon>Brassicaceae</taxon>
        <taxon>Camelineae</taxon>
        <taxon>Arabidopsis</taxon>
    </lineage>
</organism>
<name>AAP6_ARATH</name>